<organism>
    <name type="scientific">Anopheles gambiae</name>
    <name type="common">African malaria mosquito</name>
    <dbReference type="NCBI Taxonomy" id="7165"/>
    <lineage>
        <taxon>Eukaryota</taxon>
        <taxon>Metazoa</taxon>
        <taxon>Ecdysozoa</taxon>
        <taxon>Arthropoda</taxon>
        <taxon>Hexapoda</taxon>
        <taxon>Insecta</taxon>
        <taxon>Pterygota</taxon>
        <taxon>Neoptera</taxon>
        <taxon>Endopterygota</taxon>
        <taxon>Diptera</taxon>
        <taxon>Nematocera</taxon>
        <taxon>Culicoidea</taxon>
        <taxon>Culicidae</taxon>
        <taxon>Anophelinae</taxon>
        <taxon>Anopheles</taxon>
    </lineage>
</organism>
<protein>
    <recommendedName>
        <fullName evidence="1">S-methyl-5'-thioadenosine phosphorylase</fullName>
        <ecNumber evidence="1">2.4.2.28</ecNumber>
    </recommendedName>
    <alternativeName>
        <fullName evidence="1">5'-methylthioadenosine phosphorylase</fullName>
        <shortName evidence="1">MTA phosphorylase</shortName>
        <shortName evidence="1">MTAP</shortName>
        <shortName evidence="1">MTAPase</shortName>
    </alternativeName>
</protein>
<gene>
    <name type="ORF">AGAP005129</name>
</gene>
<accession>Q7Q9N9</accession>
<reference key="1">
    <citation type="journal article" date="2002" name="Science">
        <title>The genome sequence of the malaria mosquito Anopheles gambiae.</title>
        <authorList>
            <person name="Holt R.A."/>
            <person name="Subramanian G.M."/>
            <person name="Halpern A."/>
            <person name="Sutton G.G."/>
            <person name="Charlab R."/>
            <person name="Nusskern D.R."/>
            <person name="Wincker P."/>
            <person name="Clark A.G."/>
            <person name="Ribeiro J.M.C."/>
            <person name="Wides R."/>
            <person name="Salzberg S.L."/>
            <person name="Loftus B.J."/>
            <person name="Yandell M.D."/>
            <person name="Majoros W.H."/>
            <person name="Rusch D.B."/>
            <person name="Lai Z."/>
            <person name="Kraft C.L."/>
            <person name="Abril J.F."/>
            <person name="Anthouard V."/>
            <person name="Arensburger P."/>
            <person name="Atkinson P.W."/>
            <person name="Baden H."/>
            <person name="de Berardinis V."/>
            <person name="Baldwin D."/>
            <person name="Benes V."/>
            <person name="Biedler J."/>
            <person name="Blass C."/>
            <person name="Bolanos R."/>
            <person name="Boscus D."/>
            <person name="Barnstead M."/>
            <person name="Cai S."/>
            <person name="Center A."/>
            <person name="Chaturverdi K."/>
            <person name="Christophides G.K."/>
            <person name="Chrystal M.A.M."/>
            <person name="Clamp M."/>
            <person name="Cravchik A."/>
            <person name="Curwen V."/>
            <person name="Dana A."/>
            <person name="Delcher A."/>
            <person name="Dew I."/>
            <person name="Evans C.A."/>
            <person name="Flanigan M."/>
            <person name="Grundschober-Freimoser A."/>
            <person name="Friedli L."/>
            <person name="Gu Z."/>
            <person name="Guan P."/>
            <person name="Guigo R."/>
            <person name="Hillenmeyer M.E."/>
            <person name="Hladun S.L."/>
            <person name="Hogan J.R."/>
            <person name="Hong Y.S."/>
            <person name="Hoover J."/>
            <person name="Jaillon O."/>
            <person name="Ke Z."/>
            <person name="Kodira C.D."/>
            <person name="Kokoza E."/>
            <person name="Koutsos A."/>
            <person name="Letunic I."/>
            <person name="Levitsky A.A."/>
            <person name="Liang Y."/>
            <person name="Lin J.-J."/>
            <person name="Lobo N.F."/>
            <person name="Lopez J.R."/>
            <person name="Malek J.A."/>
            <person name="McIntosh T.C."/>
            <person name="Meister S."/>
            <person name="Miller J.R."/>
            <person name="Mobarry C."/>
            <person name="Mongin E."/>
            <person name="Murphy S.D."/>
            <person name="O'Brochta D.A."/>
            <person name="Pfannkoch C."/>
            <person name="Qi R."/>
            <person name="Regier M.A."/>
            <person name="Remington K."/>
            <person name="Shao H."/>
            <person name="Sharakhova M.V."/>
            <person name="Sitter C.D."/>
            <person name="Shetty J."/>
            <person name="Smith T.J."/>
            <person name="Strong R."/>
            <person name="Sun J."/>
            <person name="Thomasova D."/>
            <person name="Ton L.Q."/>
            <person name="Topalis P."/>
            <person name="Tu Z.J."/>
            <person name="Unger M.F."/>
            <person name="Walenz B."/>
            <person name="Wang A.H."/>
            <person name="Wang J."/>
            <person name="Wang M."/>
            <person name="Wang X."/>
            <person name="Woodford K.J."/>
            <person name="Wortman J.R."/>
            <person name="Wu M."/>
            <person name="Yao A."/>
            <person name="Zdobnov E.M."/>
            <person name="Zhang H."/>
            <person name="Zhao Q."/>
            <person name="Zhao S."/>
            <person name="Zhu S.C."/>
            <person name="Zhimulev I."/>
            <person name="Coluzzi M."/>
            <person name="della Torre A."/>
            <person name="Roth C.W."/>
            <person name="Louis C."/>
            <person name="Kalush F."/>
            <person name="Mural R.J."/>
            <person name="Myers E.W."/>
            <person name="Adams M.D."/>
            <person name="Smith H.O."/>
            <person name="Broder S."/>
            <person name="Gardner M.J."/>
            <person name="Fraser C.M."/>
            <person name="Birney E."/>
            <person name="Bork P."/>
            <person name="Brey P.T."/>
            <person name="Venter J.C."/>
            <person name="Weissenbach J."/>
            <person name="Kafatos F.C."/>
            <person name="Collins F.H."/>
            <person name="Hoffman S.L."/>
        </authorList>
    </citation>
    <scope>NUCLEOTIDE SEQUENCE [LARGE SCALE GENOMIC DNA]</scope>
    <source>
        <strain>PEST</strain>
    </source>
</reference>
<feature type="chain" id="PRO_0000415119" description="S-methyl-5'-thioadenosine phosphorylase">
    <location>
        <begin position="1"/>
        <end position="278"/>
    </location>
</feature>
<feature type="binding site" evidence="1">
    <location>
        <position position="13"/>
    </location>
    <ligand>
        <name>phosphate</name>
        <dbReference type="ChEBI" id="CHEBI:43474"/>
    </ligand>
</feature>
<feature type="binding site" evidence="1">
    <location>
        <begin position="55"/>
        <end position="56"/>
    </location>
    <ligand>
        <name>phosphate</name>
        <dbReference type="ChEBI" id="CHEBI:43474"/>
    </ligand>
</feature>
<feature type="binding site" evidence="1">
    <location>
        <begin position="88"/>
        <end position="89"/>
    </location>
    <ligand>
        <name>phosphate</name>
        <dbReference type="ChEBI" id="CHEBI:43474"/>
    </ligand>
</feature>
<feature type="binding site" evidence="1">
    <location>
        <position position="190"/>
    </location>
    <ligand>
        <name>substrate</name>
    </ligand>
</feature>
<feature type="binding site" evidence="1">
    <location>
        <position position="191"/>
    </location>
    <ligand>
        <name>phosphate</name>
        <dbReference type="ChEBI" id="CHEBI:43474"/>
    </ligand>
</feature>
<feature type="binding site" evidence="1">
    <location>
        <begin position="214"/>
        <end position="216"/>
    </location>
    <ligand>
        <name>substrate</name>
    </ligand>
</feature>
<feature type="site" description="Important for substrate specificity" evidence="1">
    <location>
        <position position="172"/>
    </location>
</feature>
<feature type="site" description="Important for substrate specificity" evidence="1">
    <location>
        <position position="227"/>
    </location>
</feature>
<name>MTAP_ANOGA</name>
<comment type="function">
    <text evidence="1">Catalyzes the reversible phosphorylation of S-methyl-5'-thioadenosine (MTA) to adenine and 5-methylthioribose-1-phosphate. Involved in the breakdown of MTA, a major by-product of polyamine biosynthesis. Responsible for the first step in the methionine salvage pathway after MTA has been generated from S-adenosylmethionine. Has broad substrate specificity with 6-aminopurine nucleosides as preferred substrates.</text>
</comment>
<comment type="catalytic activity">
    <reaction evidence="1">
        <text>S-methyl-5'-thioadenosine + phosphate = 5-(methylsulfanyl)-alpha-D-ribose 1-phosphate + adenine</text>
        <dbReference type="Rhea" id="RHEA:11852"/>
        <dbReference type="ChEBI" id="CHEBI:16708"/>
        <dbReference type="ChEBI" id="CHEBI:17509"/>
        <dbReference type="ChEBI" id="CHEBI:43474"/>
        <dbReference type="ChEBI" id="CHEBI:58533"/>
        <dbReference type="EC" id="2.4.2.28"/>
    </reaction>
</comment>
<comment type="pathway">
    <text evidence="1">Amino-acid biosynthesis; L-methionine biosynthesis via salvage pathway; S-methyl-5-thio-alpha-D-ribose 1-phosphate from S-methyl-5'-thioadenosine (phosphorylase route): step 1/1.</text>
</comment>
<comment type="subunit">
    <text evidence="1">Homotrimer.</text>
</comment>
<comment type="subcellular location">
    <subcellularLocation>
        <location evidence="1">Cytoplasm</location>
    </subcellularLocation>
    <subcellularLocation>
        <location evidence="1">Nucleus</location>
    </subcellularLocation>
</comment>
<comment type="similarity">
    <text evidence="1">Belongs to the PNP/MTAP phosphorylase family. MTAP subfamily.</text>
</comment>
<sequence>MVSKVKIGIIGGSGLDDSQIIENRTERVVNTHFGIPSDVLIEGKIAGVDCVLLARHGRNHSIMPSNVNYRANIWALKTLGCTHVIVSTATGSLKEEIHPGDIVIPDNFIDRTTKRVQTFYDGNELLSGVCHIPMEPAFCNRTRDVLIETARGIGLGVHEKGTVVTIEGPRFSSKAESNLFRQWGADLVNMTLVPEVVLAKEAGLCYAAIAMATDYDCWREAGEDVNVADVLATFKKNVTKVTDLIINAIPKVAALDWSDTIEELGKTVNTSIMLPHSN</sequence>
<evidence type="ECO:0000255" key="1">
    <source>
        <dbReference type="HAMAP-Rule" id="MF_03155"/>
    </source>
</evidence>
<dbReference type="EC" id="2.4.2.28" evidence="1"/>
<dbReference type="EMBL" id="AAAB01008900">
    <property type="protein sequence ID" value="EAA09511.4"/>
    <property type="molecule type" value="Genomic_DNA"/>
</dbReference>
<dbReference type="SMR" id="Q7Q9N9"/>
<dbReference type="FunCoup" id="Q7Q9N9">
    <property type="interactions" value="1509"/>
</dbReference>
<dbReference type="STRING" id="7165.Q7Q9N9"/>
<dbReference type="PaxDb" id="7165-AGAP005129-PA"/>
<dbReference type="EnsemblMetazoa" id="AGAP005129-RA">
    <property type="protein sequence ID" value="AGAP005129-PA"/>
    <property type="gene ID" value="AGAP005129"/>
</dbReference>
<dbReference type="GeneID" id="1274807"/>
<dbReference type="KEGG" id="aga:1274807"/>
<dbReference type="VEuPathDB" id="VectorBase:AGAMI1_005220"/>
<dbReference type="VEuPathDB" id="VectorBase:AGAP005129"/>
<dbReference type="eggNOG" id="KOG3985">
    <property type="taxonomic scope" value="Eukaryota"/>
</dbReference>
<dbReference type="HOGENOM" id="CLU_054456_0_0_1"/>
<dbReference type="InParanoid" id="Q7Q9N9"/>
<dbReference type="OMA" id="ADPFCPE"/>
<dbReference type="PhylomeDB" id="Q7Q9N9"/>
<dbReference type="UniPathway" id="UPA00904">
    <property type="reaction ID" value="UER00873"/>
</dbReference>
<dbReference type="Proteomes" id="UP000007062">
    <property type="component" value="Chromosome 2L"/>
</dbReference>
<dbReference type="GO" id="GO:0005829">
    <property type="term" value="C:cytosol"/>
    <property type="evidence" value="ECO:0000318"/>
    <property type="project" value="GO_Central"/>
</dbReference>
<dbReference type="GO" id="GO:0005634">
    <property type="term" value="C:nucleus"/>
    <property type="evidence" value="ECO:0007669"/>
    <property type="project" value="UniProtKB-SubCell"/>
</dbReference>
<dbReference type="GO" id="GO:0017061">
    <property type="term" value="F:S-methyl-5-thioadenosine phosphorylase activity"/>
    <property type="evidence" value="ECO:0000318"/>
    <property type="project" value="GO_Central"/>
</dbReference>
<dbReference type="GO" id="GO:0019509">
    <property type="term" value="P:L-methionine salvage from methylthioadenosine"/>
    <property type="evidence" value="ECO:0000318"/>
    <property type="project" value="GO_Central"/>
</dbReference>
<dbReference type="GO" id="GO:0006166">
    <property type="term" value="P:purine ribonucleoside salvage"/>
    <property type="evidence" value="ECO:0007669"/>
    <property type="project" value="UniProtKB-KW"/>
</dbReference>
<dbReference type="CDD" id="cd09010">
    <property type="entry name" value="MTAP_SsMTAPII_like_MTIP"/>
    <property type="match status" value="1"/>
</dbReference>
<dbReference type="FunFam" id="3.40.50.1580:FF:000006">
    <property type="entry name" value="Purine nucleoside phosphorylase"/>
    <property type="match status" value="1"/>
</dbReference>
<dbReference type="Gene3D" id="3.40.50.1580">
    <property type="entry name" value="Nucleoside phosphorylase domain"/>
    <property type="match status" value="1"/>
</dbReference>
<dbReference type="HAMAP" id="MF_01963">
    <property type="entry name" value="MTAP"/>
    <property type="match status" value="1"/>
</dbReference>
<dbReference type="InterPro" id="IPR010044">
    <property type="entry name" value="MTAP"/>
</dbReference>
<dbReference type="InterPro" id="IPR000845">
    <property type="entry name" value="Nucleoside_phosphorylase_d"/>
</dbReference>
<dbReference type="InterPro" id="IPR035994">
    <property type="entry name" value="Nucleoside_phosphorylase_sf"/>
</dbReference>
<dbReference type="InterPro" id="IPR018099">
    <property type="entry name" value="Purine_phosphorylase-2_CS"/>
</dbReference>
<dbReference type="NCBIfam" id="TIGR01694">
    <property type="entry name" value="MTAP"/>
    <property type="match status" value="1"/>
</dbReference>
<dbReference type="PANTHER" id="PTHR42679">
    <property type="entry name" value="S-METHYL-5'-THIOADENOSINE PHOSPHORYLASE"/>
    <property type="match status" value="1"/>
</dbReference>
<dbReference type="PANTHER" id="PTHR42679:SF2">
    <property type="entry name" value="S-METHYL-5'-THIOADENOSINE PHOSPHORYLASE"/>
    <property type="match status" value="1"/>
</dbReference>
<dbReference type="Pfam" id="PF01048">
    <property type="entry name" value="PNP_UDP_1"/>
    <property type="match status" value="1"/>
</dbReference>
<dbReference type="SUPFAM" id="SSF53167">
    <property type="entry name" value="Purine and uridine phosphorylases"/>
    <property type="match status" value="1"/>
</dbReference>
<dbReference type="PROSITE" id="PS01240">
    <property type="entry name" value="PNP_MTAP_2"/>
    <property type="match status" value="1"/>
</dbReference>
<keyword id="KW-0963">Cytoplasm</keyword>
<keyword id="KW-0328">Glycosyltransferase</keyword>
<keyword id="KW-0539">Nucleus</keyword>
<keyword id="KW-0660">Purine salvage</keyword>
<keyword id="KW-1185">Reference proteome</keyword>
<keyword id="KW-0808">Transferase</keyword>
<proteinExistence type="inferred from homology"/>